<protein>
    <recommendedName>
        <fullName>C-type lectin domain family 18 member A</fullName>
    </recommendedName>
    <alternativeName>
        <fullName>Mannose receptor-like protein</fullName>
    </alternativeName>
</protein>
<proteinExistence type="evidence at transcript level"/>
<sequence length="534" mass="58585">MTGAEEWKLSMGLEDTVPARLHEHGEASWTAERSHVCSIRQANDSAGALPVAGKPEPMARSLASAPVSPWHHMDRGSTTPAKARSHSASYHCPSSSQICVPGVGSPSAGYGDVPGASGHRPNLLSWPPALSRKESFLILTAHNRLRSRVHPPAANMQRMDWSESLAQLAEARAALCVTSVTPNLASTPGHNSHVGWNVQLMPMGSASFVEVVNLWFAEGLQYRHGDAECAHNATCAHYTQLVWATSSQLGCGRQPCFVDQEAMEAFVCAYSPGGNWDINGKTVAPYKKGTWCSLCTARVSGCFKAWDHAGGLCEVPRNPCRMSCRNLGHLNISTCRCHCQPGYTGRYCQVRCSVQCVHGQFRKEECSCICDVGYGGAQCATKVGFPFHTCDLRIDGDCFMVSPEADTYYGAKMKCQGKGGVLAQIESQKVQDILAFYLGRLETTNEVTDSDFETKNFWIGLTYKAAKDSFRWTTGEHQSFTSFAFGQPDNQGFGNCVEMQASAAFNWNDQRCKTRNRYICQFAQKHYSRWEPGP</sequence>
<organism>
    <name type="scientific">Mus musculus</name>
    <name type="common">Mouse</name>
    <dbReference type="NCBI Taxonomy" id="10090"/>
    <lineage>
        <taxon>Eukaryota</taxon>
        <taxon>Metazoa</taxon>
        <taxon>Chordata</taxon>
        <taxon>Craniata</taxon>
        <taxon>Vertebrata</taxon>
        <taxon>Euteleostomi</taxon>
        <taxon>Mammalia</taxon>
        <taxon>Eutheria</taxon>
        <taxon>Euarchontoglires</taxon>
        <taxon>Glires</taxon>
        <taxon>Rodentia</taxon>
        <taxon>Myomorpha</taxon>
        <taxon>Muroidea</taxon>
        <taxon>Muridae</taxon>
        <taxon>Murinae</taxon>
        <taxon>Mus</taxon>
        <taxon>Mus</taxon>
    </lineage>
</organism>
<comment type="subcellular location">
    <subcellularLocation>
        <location evidence="6">Secreted</location>
    </subcellularLocation>
</comment>
<comment type="alternative products">
    <event type="alternative splicing"/>
    <isoform>
        <id>Q7TSQ1-1</id>
        <name>1</name>
        <name>Form 2</name>
        <sequence type="displayed"/>
    </isoform>
    <isoform>
        <id>Q7TSQ1-2</id>
        <name>2</name>
        <name>Form 4</name>
        <sequence type="described" ref="VSP_032209"/>
    </isoform>
    <isoform>
        <id>Q7TSQ1-3</id>
        <name>3</name>
        <sequence type="described" ref="VSP_032211"/>
    </isoform>
    <isoform>
        <id>Q7TSQ1-4</id>
        <name>4</name>
        <name>Form 6</name>
        <sequence type="described" ref="VSP_032210"/>
    </isoform>
    <isoform>
        <id>Q7TSQ1-5</id>
        <name>5</name>
        <name>Form 3</name>
        <sequence type="described" ref="VSP_032208"/>
    </isoform>
</comment>
<gene>
    <name type="primary">Clec18a</name>
    <name type="synonym">Mrcl</name>
    <name type="synonym">Mrlp</name>
</gene>
<accession>Q7TSQ1</accession>
<accession>Q7TMA7</accession>
<accession>Q7TSP9</accession>
<accession>Q7TSQ0</accession>
<accession>Q7TSQ7</accession>
<feature type="chain" id="PRO_0000324318" description="C-type lectin domain family 18 member A">
    <location>
        <begin position="1"/>
        <end position="534"/>
    </location>
</feature>
<feature type="domain" description="SCP">
    <location>
        <begin position="139"/>
        <end position="270"/>
    </location>
</feature>
<feature type="domain" description="EGF-like" evidence="3">
    <location>
        <begin position="316"/>
        <end position="349"/>
    </location>
</feature>
<feature type="domain" description="C-type lectin" evidence="2">
    <location>
        <begin position="394"/>
        <end position="521"/>
    </location>
</feature>
<feature type="region of interest" description="Disordered" evidence="4">
    <location>
        <begin position="47"/>
        <end position="88"/>
    </location>
</feature>
<feature type="disulfide bond" evidence="1">
    <location>
        <begin position="324"/>
        <end position="337"/>
    </location>
</feature>
<feature type="disulfide bond" evidence="1">
    <location>
        <begin position="339"/>
        <end position="348"/>
    </location>
</feature>
<feature type="disulfide bond" evidence="1">
    <location>
        <begin position="415"/>
        <end position="520"/>
    </location>
</feature>
<feature type="disulfide bond" evidence="1">
    <location>
        <begin position="496"/>
        <end position="512"/>
    </location>
</feature>
<feature type="splice variant" id="VSP_032208" description="In isoform 5." evidence="5">
    <location>
        <begin position="1"/>
        <end position="155"/>
    </location>
</feature>
<feature type="splice variant" id="VSP_032209" description="In isoform 2." evidence="5">
    <original>MTGAEEWKLSMGLEDTVPARLHEHGEASWTAERSHVCSIRQANDSAGALPVAGKPEPMARSLASAPVSPWHHMDRGSTTPAKARSHSASYHCPSSSQICVPGVGSPSAGYGDVPGASGHRPNLLSWPP</original>
    <variation>MTGAEEWKLSMGLEDTVPARLSLTPRLVNSFMNTGRLAGQLREAMSAASGRPMIQPEPSLWLGSQSRWLGLLLLLLSLLGITWTEVQPPQPKQDPTLQ</variation>
    <location>
        <begin position="1"/>
        <end position="128"/>
    </location>
</feature>
<feature type="splice variant" id="VSP_032210" description="In isoform 4." evidence="5">
    <original>MTGAEEWKLSMGLEDTVPARLHEHGEASWTAERSHVCSIRQANDSAGALPVAGKPEPMARSLASAPVSPWHHMDRGSTTPAKARSHSASYHCPSSSQICVPGVGSPSAGYGDVPGASGHRPNLLSWPP</original>
    <variation>MNTGRLAGQLREAMSAASGRPMIQPEPSLWLGSQSRWLGLLLLLLSLLGITWTEVQPPQPKQDPTLQ</variation>
    <location>
        <begin position="1"/>
        <end position="128"/>
    </location>
</feature>
<feature type="splice variant" id="VSP_032211" description="In isoform 3." evidence="5">
    <location>
        <begin position="1"/>
        <end position="57"/>
    </location>
</feature>
<reference key="1">
    <citation type="submission" date="2003-01" db="EMBL/GenBank/DDBJ databases">
        <title>Alternatively spliced isoform 2 of mannose receptor precursor-like.</title>
        <authorList>
            <person name="Jang J.S. Sr."/>
            <person name="Ackerman S.L."/>
        </authorList>
    </citation>
    <scope>NUCLEOTIDE SEQUENCE [MRNA] (ISOFORMS 1; 2; 3; 4 AND 5)</scope>
    <source>
        <strain>C57BL/6J</strain>
        <tissue>Cerebellum</tissue>
    </source>
</reference>
<dbReference type="EMBL" id="AY223868">
    <property type="protein sequence ID" value="AAP20650.1"/>
    <property type="molecule type" value="mRNA"/>
</dbReference>
<dbReference type="EMBL" id="AY223869">
    <property type="protein sequence ID" value="AAP22983.1"/>
    <property type="molecule type" value="mRNA"/>
</dbReference>
<dbReference type="EMBL" id="AY223870">
    <property type="protein sequence ID" value="AAP22984.1"/>
    <property type="molecule type" value="mRNA"/>
</dbReference>
<dbReference type="EMBL" id="AY223871">
    <property type="protein sequence ID" value="AAP22985.1"/>
    <property type="molecule type" value="mRNA"/>
</dbReference>
<dbReference type="EMBL" id="AY223872">
    <property type="protein sequence ID" value="AAP22986.1"/>
    <property type="molecule type" value="mRNA"/>
</dbReference>
<dbReference type="EMBL" id="AY223873">
    <property type="protein sequence ID" value="AAP22987.1"/>
    <property type="molecule type" value="mRNA"/>
</dbReference>
<dbReference type="RefSeq" id="XP_006531206.3">
    <molecule id="Q7TSQ1-2"/>
    <property type="nucleotide sequence ID" value="XM_006531143.3"/>
</dbReference>
<dbReference type="SMR" id="Q7TSQ1"/>
<dbReference type="FunCoup" id="Q7TSQ1">
    <property type="interactions" value="461"/>
</dbReference>
<dbReference type="STRING" id="10090.ENSMUSP00000046546"/>
<dbReference type="GlyGen" id="Q7TSQ1">
    <property type="glycosylation" value="1 site, 1 N-linked glycan (1 site)"/>
</dbReference>
<dbReference type="PhosphoSitePlus" id="Q7TSQ1"/>
<dbReference type="PaxDb" id="10090-ENSMUSP00000046546"/>
<dbReference type="DNASU" id="353287"/>
<dbReference type="Ensembl" id="ENSMUST00000039597.14">
    <molecule id="Q7TSQ1-1"/>
    <property type="protein sequence ID" value="ENSMUSP00000046546.8"/>
    <property type="gene ID" value="ENSMUSG00000033633.16"/>
</dbReference>
<dbReference type="Ensembl" id="ENSMUST00000188466.7">
    <molecule id="Q7TSQ1-4"/>
    <property type="protein sequence ID" value="ENSMUSP00000141073.2"/>
    <property type="gene ID" value="ENSMUSG00000033633.16"/>
</dbReference>
<dbReference type="Ensembl" id="ENSMUST00000191030.7">
    <molecule id="Q7TSQ1-2"/>
    <property type="protein sequence ID" value="ENSMUSP00000139569.2"/>
    <property type="gene ID" value="ENSMUSG00000033633.16"/>
</dbReference>
<dbReference type="Ensembl" id="ENSMUST00000191469.7">
    <molecule id="Q7TSQ1-1"/>
    <property type="protein sequence ID" value="ENSMUSP00000139515.2"/>
    <property type="gene ID" value="ENSMUSG00000033633.16"/>
</dbReference>
<dbReference type="GeneID" id="353287"/>
<dbReference type="UCSC" id="uc012gkt.1">
    <molecule id="Q7TSQ1-4"/>
    <property type="organism name" value="mouse"/>
</dbReference>
<dbReference type="AGR" id="MGI:2672935"/>
<dbReference type="CTD" id="348174"/>
<dbReference type="MGI" id="MGI:2672935">
    <property type="gene designation" value="Clec18a"/>
</dbReference>
<dbReference type="VEuPathDB" id="HostDB:ENSMUSG00000033633"/>
<dbReference type="eggNOG" id="KOG3017">
    <property type="taxonomic scope" value="Eukaryota"/>
</dbReference>
<dbReference type="eggNOG" id="KOG4297">
    <property type="taxonomic scope" value="Eukaryota"/>
</dbReference>
<dbReference type="GeneTree" id="ENSGT00900000141128"/>
<dbReference type="HOGENOM" id="CLU_039012_1_0_1"/>
<dbReference type="InParanoid" id="Q7TSQ1"/>
<dbReference type="OMA" id="CAEKVQF"/>
<dbReference type="OrthoDB" id="337038at2759"/>
<dbReference type="PhylomeDB" id="Q7TSQ1"/>
<dbReference type="TreeFam" id="TF350472"/>
<dbReference type="BioGRID-ORCS" id="353287">
    <property type="hits" value="1 hit in 24 CRISPR screens"/>
</dbReference>
<dbReference type="PRO" id="PR:Q7TSQ1"/>
<dbReference type="Proteomes" id="UP000000589">
    <property type="component" value="Chromosome 8"/>
</dbReference>
<dbReference type="RNAct" id="Q7TSQ1">
    <property type="molecule type" value="protein"/>
</dbReference>
<dbReference type="Bgee" id="ENSMUSG00000033633">
    <property type="expression patterns" value="Expressed in floor plate of midbrain and 47 other cell types or tissues"/>
</dbReference>
<dbReference type="ExpressionAtlas" id="Q7TSQ1">
    <property type="expression patterns" value="baseline and differential"/>
</dbReference>
<dbReference type="GO" id="GO:0005576">
    <property type="term" value="C:extracellular region"/>
    <property type="evidence" value="ECO:0007669"/>
    <property type="project" value="UniProtKB-SubCell"/>
</dbReference>
<dbReference type="GO" id="GO:0030246">
    <property type="term" value="F:carbohydrate binding"/>
    <property type="evidence" value="ECO:0007669"/>
    <property type="project" value="UniProtKB-KW"/>
</dbReference>
<dbReference type="CDD" id="cd05380">
    <property type="entry name" value="CAP_euk"/>
    <property type="match status" value="1"/>
</dbReference>
<dbReference type="CDD" id="cd00037">
    <property type="entry name" value="CLECT"/>
    <property type="match status" value="1"/>
</dbReference>
<dbReference type="FunFam" id="3.40.33.10:FF:000014">
    <property type="entry name" value="C-type lectin domain family 18 member A"/>
    <property type="match status" value="1"/>
</dbReference>
<dbReference type="FunFam" id="3.10.100.10:FF:000037">
    <property type="entry name" value="C-type lectin domain family 18 member A-like"/>
    <property type="match status" value="1"/>
</dbReference>
<dbReference type="Gene3D" id="3.40.33.10">
    <property type="entry name" value="CAP"/>
    <property type="match status" value="1"/>
</dbReference>
<dbReference type="Gene3D" id="2.10.25.10">
    <property type="entry name" value="Laminin"/>
    <property type="match status" value="1"/>
</dbReference>
<dbReference type="Gene3D" id="3.10.100.10">
    <property type="entry name" value="Mannose-Binding Protein A, subunit A"/>
    <property type="match status" value="1"/>
</dbReference>
<dbReference type="InterPro" id="IPR001304">
    <property type="entry name" value="C-type_lectin-like"/>
</dbReference>
<dbReference type="InterPro" id="IPR016186">
    <property type="entry name" value="C-type_lectin-like/link_sf"/>
</dbReference>
<dbReference type="InterPro" id="IPR018378">
    <property type="entry name" value="C-type_lectin_CS"/>
</dbReference>
<dbReference type="InterPro" id="IPR014044">
    <property type="entry name" value="CAP_dom"/>
</dbReference>
<dbReference type="InterPro" id="IPR035940">
    <property type="entry name" value="CAP_sf"/>
</dbReference>
<dbReference type="InterPro" id="IPR001283">
    <property type="entry name" value="CRISP-related"/>
</dbReference>
<dbReference type="InterPro" id="IPR016187">
    <property type="entry name" value="CTDL_fold"/>
</dbReference>
<dbReference type="InterPro" id="IPR000742">
    <property type="entry name" value="EGF-like_dom"/>
</dbReference>
<dbReference type="PANTHER" id="PTHR10334">
    <property type="entry name" value="CYSTEINE-RICH SECRETORY PROTEIN-RELATED"/>
    <property type="match status" value="1"/>
</dbReference>
<dbReference type="Pfam" id="PF00188">
    <property type="entry name" value="CAP"/>
    <property type="match status" value="1"/>
</dbReference>
<dbReference type="Pfam" id="PF00059">
    <property type="entry name" value="Lectin_C"/>
    <property type="match status" value="1"/>
</dbReference>
<dbReference type="PRINTS" id="PR00837">
    <property type="entry name" value="V5TPXLIKE"/>
</dbReference>
<dbReference type="SMART" id="SM00034">
    <property type="entry name" value="CLECT"/>
    <property type="match status" value="1"/>
</dbReference>
<dbReference type="SMART" id="SM00181">
    <property type="entry name" value="EGF"/>
    <property type="match status" value="2"/>
</dbReference>
<dbReference type="SMART" id="SM00198">
    <property type="entry name" value="SCP"/>
    <property type="match status" value="1"/>
</dbReference>
<dbReference type="SUPFAM" id="SSF56436">
    <property type="entry name" value="C-type lectin-like"/>
    <property type="match status" value="1"/>
</dbReference>
<dbReference type="SUPFAM" id="SSF55797">
    <property type="entry name" value="PR-1-like"/>
    <property type="match status" value="1"/>
</dbReference>
<dbReference type="PROSITE" id="PS00615">
    <property type="entry name" value="C_TYPE_LECTIN_1"/>
    <property type="match status" value="1"/>
</dbReference>
<dbReference type="PROSITE" id="PS50041">
    <property type="entry name" value="C_TYPE_LECTIN_2"/>
    <property type="match status" value="1"/>
</dbReference>
<dbReference type="PROSITE" id="PS00022">
    <property type="entry name" value="EGF_1"/>
    <property type="match status" value="2"/>
</dbReference>
<dbReference type="PROSITE" id="PS01186">
    <property type="entry name" value="EGF_2"/>
    <property type="match status" value="2"/>
</dbReference>
<dbReference type="PROSITE" id="PS50026">
    <property type="entry name" value="EGF_3"/>
    <property type="match status" value="1"/>
</dbReference>
<name>CL18A_MOUSE</name>
<evidence type="ECO:0000250" key="1"/>
<evidence type="ECO:0000255" key="2">
    <source>
        <dbReference type="PROSITE-ProRule" id="PRU00040"/>
    </source>
</evidence>
<evidence type="ECO:0000255" key="3">
    <source>
        <dbReference type="PROSITE-ProRule" id="PRU00076"/>
    </source>
</evidence>
<evidence type="ECO:0000256" key="4">
    <source>
        <dbReference type="SAM" id="MobiDB-lite"/>
    </source>
</evidence>
<evidence type="ECO:0000303" key="5">
    <source ref="1"/>
</evidence>
<evidence type="ECO:0000305" key="6"/>
<keyword id="KW-0025">Alternative splicing</keyword>
<keyword id="KW-1015">Disulfide bond</keyword>
<keyword id="KW-0245">EGF-like domain</keyword>
<keyword id="KW-0430">Lectin</keyword>
<keyword id="KW-0675">Receptor</keyword>
<keyword id="KW-1185">Reference proteome</keyword>
<keyword id="KW-0964">Secreted</keyword>